<reference key="1">
    <citation type="journal article" date="2008" name="PLoS Genet.">
        <title>Genomic islands in the pathogenic filamentous fungus Aspergillus fumigatus.</title>
        <authorList>
            <person name="Fedorova N.D."/>
            <person name="Khaldi N."/>
            <person name="Joardar V.S."/>
            <person name="Maiti R."/>
            <person name="Amedeo P."/>
            <person name="Anderson M.J."/>
            <person name="Crabtree J."/>
            <person name="Silva J.C."/>
            <person name="Badger J.H."/>
            <person name="Albarraq A."/>
            <person name="Angiuoli S."/>
            <person name="Bussey H."/>
            <person name="Bowyer P."/>
            <person name="Cotty P.J."/>
            <person name="Dyer P.S."/>
            <person name="Egan A."/>
            <person name="Galens K."/>
            <person name="Fraser-Liggett C.M."/>
            <person name="Haas B.J."/>
            <person name="Inman J.M."/>
            <person name="Kent R."/>
            <person name="Lemieux S."/>
            <person name="Malavazi I."/>
            <person name="Orvis J."/>
            <person name="Roemer T."/>
            <person name="Ronning C.M."/>
            <person name="Sundaram J.P."/>
            <person name="Sutton G."/>
            <person name="Turner G."/>
            <person name="Venter J.C."/>
            <person name="White O.R."/>
            <person name="Whitty B.R."/>
            <person name="Youngman P."/>
            <person name="Wolfe K.H."/>
            <person name="Goldman G.H."/>
            <person name="Wortman J.R."/>
            <person name="Jiang B."/>
            <person name="Denning D.W."/>
            <person name="Nierman W.C."/>
        </authorList>
    </citation>
    <scope>NUCLEOTIDE SEQUENCE [LARGE SCALE GENOMIC DNA]</scope>
    <source>
        <strain>ATCC 1020 / DSM 3700 / CBS 544.65 / FGSC A1164 / JCM 1740 / NRRL 181 / WB 181</strain>
    </source>
</reference>
<protein>
    <recommendedName>
        <fullName>Restriction of telomere capping protein 5</fullName>
    </recommendedName>
</protein>
<organism>
    <name type="scientific">Neosartorya fischeri (strain ATCC 1020 / DSM 3700 / CBS 544.65 / FGSC A1164 / JCM 1740 / NRRL 181 / WB 181)</name>
    <name type="common">Aspergillus fischerianus</name>
    <dbReference type="NCBI Taxonomy" id="331117"/>
    <lineage>
        <taxon>Eukaryota</taxon>
        <taxon>Fungi</taxon>
        <taxon>Dikarya</taxon>
        <taxon>Ascomycota</taxon>
        <taxon>Pezizomycotina</taxon>
        <taxon>Eurotiomycetes</taxon>
        <taxon>Eurotiomycetidae</taxon>
        <taxon>Eurotiales</taxon>
        <taxon>Aspergillaceae</taxon>
        <taxon>Aspergillus</taxon>
        <taxon>Aspergillus subgen. Fumigati</taxon>
    </lineage>
</organism>
<proteinExistence type="inferred from homology"/>
<sequence>MGVGQSTELPGHAGTPEHLSHVLAERFATKCFTPLELTHFKDNFFSRAIDQGGMKYWNEKILSDFLGIPDSSDSHCPLDAGPVIFRMVSYLGAFPFQNTLAPSVLTFEAMVKVAVLLTERYGKVLRPARKDRIKLLFGSLADVGRRDVGASPGAEDVRKETDDSSAVKSHVTGFEVDAPANDDYGDEDEDDDDLALAALESLDAIDVFKHDSRIDKKVYEARISVATFRRLLMLLIVIAPLKTLEPVTSYSSDLNEARMESVRKEADTILAAFSTEDSDGGISYRSFANITSTALPYLFDPLTPLFEHLLFSKNLDMTKKSGSDAIVTDTIEKPSDSPGPSPSTIMLPGSFESSILKPSVVSHLSFFLPSPTSNVNLLRGNMRLHPVFSTAVHGSSLTSFSHNVLTWNAGTLLLLEGAVSEPSEHGEGMVTLGAYLPQPWKSAPLSHSSTKPSDSSALPCLFELSPKHQLLQGNPSPSVQKPNAPVAYFSTSTGIAIGCQVPPPSRSQLLTPTPLGAGSLTIDTSLDSATFYMSSIGHNGVFLPPATTSMSEETVKKQIDIYTLEIWGLVPEPSDASSAEPRQSAVELQRAKWEFEAREAERRRNLNLKAGAGDSAMEGARWLLETAGLIGDRPGQRGGSI</sequence>
<gene>
    <name type="primary">rtc5</name>
    <name type="ORF">NFIA_108120</name>
</gene>
<name>RTC5_NEOFI</name>
<evidence type="ECO:0000250" key="1"/>
<evidence type="ECO:0000255" key="2">
    <source>
        <dbReference type="PROSITE-ProRule" id="PRU01234"/>
    </source>
</evidence>
<evidence type="ECO:0000256" key="3">
    <source>
        <dbReference type="SAM" id="MobiDB-lite"/>
    </source>
</evidence>
<evidence type="ECO:0000305" key="4"/>
<keyword id="KW-0963">Cytoplasm</keyword>
<keyword id="KW-1185">Reference proteome</keyword>
<accession>A1CXG7</accession>
<comment type="function">
    <text evidence="1">May be involved in a process influencing telomere capping.</text>
</comment>
<comment type="subcellular location">
    <subcellularLocation>
        <location evidence="1">Cytoplasm</location>
    </subcellularLocation>
</comment>
<comment type="similarity">
    <text evidence="4">Belongs to the RTC5 family.</text>
</comment>
<feature type="chain" id="PRO_0000408832" description="Restriction of telomere capping protein 5">
    <location>
        <begin position="1"/>
        <end position="641"/>
    </location>
</feature>
<feature type="domain" description="TLDc" evidence="2">
    <location>
        <begin position="354"/>
        <end position="570"/>
    </location>
</feature>
<feature type="region of interest" description="Disordered" evidence="3">
    <location>
        <begin position="149"/>
        <end position="168"/>
    </location>
</feature>
<dbReference type="EMBL" id="DS027685">
    <property type="protein sequence ID" value="EAW25319.1"/>
    <property type="molecule type" value="Genomic_DNA"/>
</dbReference>
<dbReference type="RefSeq" id="XP_001267216.1">
    <property type="nucleotide sequence ID" value="XM_001267215.1"/>
</dbReference>
<dbReference type="STRING" id="331117.A1CXG7"/>
<dbReference type="EnsemblFungi" id="EAW25319">
    <property type="protein sequence ID" value="EAW25319"/>
    <property type="gene ID" value="NFIA_108120"/>
</dbReference>
<dbReference type="GeneID" id="4593317"/>
<dbReference type="KEGG" id="nfi:NFIA_108120"/>
<dbReference type="VEuPathDB" id="FungiDB:NFIA_108120"/>
<dbReference type="eggNOG" id="ENOG502QV3R">
    <property type="taxonomic scope" value="Eukaryota"/>
</dbReference>
<dbReference type="HOGENOM" id="CLU_011918_1_0_1"/>
<dbReference type="OMA" id="KWEFEAR"/>
<dbReference type="OrthoDB" id="289228at2759"/>
<dbReference type="Proteomes" id="UP000006702">
    <property type="component" value="Unassembled WGS sequence"/>
</dbReference>
<dbReference type="GO" id="GO:0005737">
    <property type="term" value="C:cytoplasm"/>
    <property type="evidence" value="ECO:0007669"/>
    <property type="project" value="UniProtKB-SubCell"/>
</dbReference>
<dbReference type="InterPro" id="IPR006571">
    <property type="entry name" value="TLDc_dom"/>
</dbReference>
<dbReference type="Pfam" id="PF07534">
    <property type="entry name" value="TLD"/>
    <property type="match status" value="1"/>
</dbReference>
<dbReference type="SMART" id="SM00584">
    <property type="entry name" value="TLDc"/>
    <property type="match status" value="1"/>
</dbReference>
<dbReference type="PROSITE" id="PS51886">
    <property type="entry name" value="TLDC"/>
    <property type="match status" value="1"/>
</dbReference>